<sequence length="146" mass="15990">VQWSSSERSVISGLWAKVNAAEVGPQALARLLVLYPWTQRYFGKFGDLSSNAALMGNANVAKHGKDLLLADLKAVKNMDNVKALYAKXXXXXXXELNVDPDNFTLLGDCLTIVLAMKFGADFTPVDQAVWQKFVAVVVSGLSKQYF</sequence>
<protein>
    <recommendedName>
        <fullName evidence="4">Hemoglobin cathodic subunit beta</fullName>
    </recommendedName>
    <alternativeName>
        <fullName evidence="4">Hemoglobin cathodic beta chain</fullName>
    </alternativeName>
</protein>
<comment type="function">
    <text evidence="6">Involved in oxygen transport from the gills to various peripheral tissues.</text>
</comment>
<comment type="subunit">
    <text evidence="1">Heterotetramer of two alpha and two beta chains.</text>
</comment>
<comment type="tissue specificity">
    <text evidence="3">Red blood cells.</text>
</comment>
<comment type="mass spectrometry" mass="16004.0" error="3.0" method="Electrospray" evidence="3"/>
<comment type="similarity">
    <text evidence="2">Belongs to the globin family.</text>
</comment>
<reference evidence="5" key="1">
    <citation type="journal article" date="2013" name="J. Comp. Physiol. B">
        <title>The hemoglobin system of the serpent eel Ophisurus serpens: structural and functional characterization.</title>
        <authorList>
            <person name="Manconi B."/>
            <person name="Pellegrini M."/>
            <person name="Messana I."/>
            <person name="Sanna M.T."/>
            <person name="Castagnola M."/>
            <person name="Iavarone F."/>
            <person name="Coluccia E."/>
            <person name="Giardina B."/>
            <person name="Olianas A."/>
        </authorList>
    </citation>
    <scope>PROTEIN SEQUENCE</scope>
    <scope>FUNCTION</scope>
    <scope>TISSUE SPECIFICITY</scope>
    <scope>MASS SPECTROMETRY</scope>
    <source>
        <tissue evidence="3">Erythrocyte</tissue>
    </source>
</reference>
<keyword id="KW-0903">Direct protein sequencing</keyword>
<keyword id="KW-0349">Heme</keyword>
<keyword id="KW-0408">Iron</keyword>
<keyword id="KW-0479">Metal-binding</keyword>
<keyword id="KW-0561">Oxygen transport</keyword>
<keyword id="KW-0813">Transport</keyword>
<organism>
    <name type="scientific">Ophisurus serpens</name>
    <name type="common">Serpent eel</name>
    <name type="synonym">Muraena serpens</name>
    <dbReference type="NCBI Taxonomy" id="1234705"/>
    <lineage>
        <taxon>Eukaryota</taxon>
        <taxon>Metazoa</taxon>
        <taxon>Chordata</taxon>
        <taxon>Craniata</taxon>
        <taxon>Vertebrata</taxon>
        <taxon>Euteleostomi</taxon>
        <taxon>Actinopterygii</taxon>
        <taxon>Neopterygii</taxon>
        <taxon>Teleostei</taxon>
        <taxon>Anguilliformes</taxon>
        <taxon>Ophichthidae</taxon>
        <taxon>Ophisurus</taxon>
    </lineage>
</organism>
<name>HBBC_OPHSE</name>
<proteinExistence type="evidence at protein level"/>
<evidence type="ECO:0000250" key="1">
    <source>
        <dbReference type="UniProtKB" id="P29623"/>
    </source>
</evidence>
<evidence type="ECO:0000255" key="2">
    <source>
        <dbReference type="PROSITE-ProRule" id="PRU00238"/>
    </source>
</evidence>
<evidence type="ECO:0000269" key="3">
    <source>
    </source>
</evidence>
<evidence type="ECO:0000303" key="4">
    <source>
    </source>
</evidence>
<evidence type="ECO:0000305" key="5"/>
<evidence type="ECO:0000305" key="6">
    <source>
    </source>
</evidence>
<dbReference type="GO" id="GO:0072562">
    <property type="term" value="C:blood microparticle"/>
    <property type="evidence" value="ECO:0007669"/>
    <property type="project" value="TreeGrafter"/>
</dbReference>
<dbReference type="GO" id="GO:0031838">
    <property type="term" value="C:haptoglobin-hemoglobin complex"/>
    <property type="evidence" value="ECO:0007669"/>
    <property type="project" value="TreeGrafter"/>
</dbReference>
<dbReference type="GO" id="GO:0005833">
    <property type="term" value="C:hemoglobin complex"/>
    <property type="evidence" value="ECO:0000314"/>
    <property type="project" value="UniProtKB"/>
</dbReference>
<dbReference type="GO" id="GO:0031720">
    <property type="term" value="F:haptoglobin binding"/>
    <property type="evidence" value="ECO:0007669"/>
    <property type="project" value="TreeGrafter"/>
</dbReference>
<dbReference type="GO" id="GO:0020037">
    <property type="term" value="F:heme binding"/>
    <property type="evidence" value="ECO:0007669"/>
    <property type="project" value="InterPro"/>
</dbReference>
<dbReference type="GO" id="GO:0046872">
    <property type="term" value="F:metal ion binding"/>
    <property type="evidence" value="ECO:0007669"/>
    <property type="project" value="UniProtKB-KW"/>
</dbReference>
<dbReference type="GO" id="GO:0043177">
    <property type="term" value="F:organic acid binding"/>
    <property type="evidence" value="ECO:0007669"/>
    <property type="project" value="TreeGrafter"/>
</dbReference>
<dbReference type="GO" id="GO:0019825">
    <property type="term" value="F:oxygen binding"/>
    <property type="evidence" value="ECO:0000314"/>
    <property type="project" value="UniProtKB"/>
</dbReference>
<dbReference type="GO" id="GO:0005344">
    <property type="term" value="F:oxygen carrier activity"/>
    <property type="evidence" value="ECO:0007669"/>
    <property type="project" value="UniProtKB-KW"/>
</dbReference>
<dbReference type="GO" id="GO:0004601">
    <property type="term" value="F:peroxidase activity"/>
    <property type="evidence" value="ECO:0007669"/>
    <property type="project" value="TreeGrafter"/>
</dbReference>
<dbReference type="GO" id="GO:0042744">
    <property type="term" value="P:hydrogen peroxide catabolic process"/>
    <property type="evidence" value="ECO:0007669"/>
    <property type="project" value="TreeGrafter"/>
</dbReference>
<dbReference type="CDD" id="cd08925">
    <property type="entry name" value="Hb-beta-like"/>
    <property type="match status" value="1"/>
</dbReference>
<dbReference type="Gene3D" id="1.10.490.10">
    <property type="entry name" value="Globins"/>
    <property type="match status" value="1"/>
</dbReference>
<dbReference type="InterPro" id="IPR000971">
    <property type="entry name" value="Globin"/>
</dbReference>
<dbReference type="InterPro" id="IPR009050">
    <property type="entry name" value="Globin-like_sf"/>
</dbReference>
<dbReference type="InterPro" id="IPR012292">
    <property type="entry name" value="Globin/Proto"/>
</dbReference>
<dbReference type="InterPro" id="IPR002337">
    <property type="entry name" value="Hemoglobin_b"/>
</dbReference>
<dbReference type="InterPro" id="IPR050056">
    <property type="entry name" value="Hemoglobin_oxygen_transport"/>
</dbReference>
<dbReference type="PANTHER" id="PTHR11442">
    <property type="entry name" value="HEMOGLOBIN FAMILY MEMBER"/>
    <property type="match status" value="1"/>
</dbReference>
<dbReference type="PANTHER" id="PTHR11442:SF7">
    <property type="entry name" value="HEMOGLOBIN SUBUNIT EPSILON"/>
    <property type="match status" value="1"/>
</dbReference>
<dbReference type="Pfam" id="PF00042">
    <property type="entry name" value="Globin"/>
    <property type="match status" value="1"/>
</dbReference>
<dbReference type="PRINTS" id="PR00814">
    <property type="entry name" value="BETAHAEM"/>
</dbReference>
<dbReference type="SUPFAM" id="SSF46458">
    <property type="entry name" value="Globin-like"/>
    <property type="match status" value="1"/>
</dbReference>
<dbReference type="PROSITE" id="PS01033">
    <property type="entry name" value="GLOBIN"/>
    <property type="match status" value="1"/>
</dbReference>
<accession>B3EWR8</accession>
<feature type="chain" id="PRO_0000423888" description="Hemoglobin cathodic subunit beta">
    <location>
        <begin position="1"/>
        <end position="146"/>
    </location>
</feature>
<feature type="domain" description="Globin" evidence="2">
    <location>
        <begin position="2"/>
        <end position="146"/>
    </location>
</feature>
<feature type="binding site" description="distal binding residue" evidence="1 2">
    <location>
        <position position="63"/>
    </location>
    <ligand>
        <name>heme b</name>
        <dbReference type="ChEBI" id="CHEBI:60344"/>
    </ligand>
    <ligandPart>
        <name>Fe</name>
        <dbReference type="ChEBI" id="CHEBI:18248"/>
    </ligandPart>
</feature>
<feature type="unsure residue" description="I or L" evidence="3">
    <location>
        <position position="11"/>
    </location>
</feature>
<feature type="unsure residue" description="L or I" evidence="3">
    <location>
        <position position="14"/>
    </location>
</feature>
<feature type="unsure residue" description="L or I" evidence="3">
    <location>
        <position position="28"/>
    </location>
</feature>
<feature type="unsure residue" description="L or I" evidence="3">
    <location>
        <position position="31"/>
    </location>
</feature>
<feature type="unsure residue" description="L or I" evidence="3">
    <location>
        <position position="32"/>
    </location>
</feature>
<feature type="unsure residue" description="L or I" evidence="3">
    <location>
        <position position="34"/>
    </location>
</feature>
<feature type="unsure residue" description="L or I" evidence="3">
    <location>
        <position position="48"/>
    </location>
</feature>
<feature type="unsure residue" description="L or I" evidence="3">
    <location>
        <position position="54"/>
    </location>
</feature>
<feature type="unsure residue" description="L or I" evidence="3">
    <location>
        <position position="67"/>
    </location>
</feature>
<feature type="unsure residue" description="L or I" evidence="3">
    <location>
        <position position="68"/>
    </location>
</feature>
<feature type="unsure residue" description="L or I" evidence="3">
    <location>
        <position position="69"/>
    </location>
</feature>
<feature type="unsure residue" description="L or I" evidence="3">
    <location>
        <position position="72"/>
    </location>
</feature>
<feature type="unsure residue" description="L or I" evidence="3">
    <location>
        <position position="84"/>
    </location>
</feature>
<feature type="unsure residue" description="L or I" evidence="3">
    <location>
        <position position="96"/>
    </location>
</feature>
<feature type="unsure residue" description="L or I" evidence="3">
    <location>
        <position position="105"/>
    </location>
</feature>
<feature type="unsure residue" description="L or I" evidence="3">
    <location>
        <position position="106"/>
    </location>
</feature>
<feature type="unsure residue" description="L or I" evidence="3">
    <location>
        <position position="110"/>
    </location>
</feature>
<feature type="unsure residue" description="I or L" evidence="3">
    <location>
        <position position="112"/>
    </location>
</feature>
<feature type="unsure residue" description="L or I" evidence="3">
    <location>
        <position position="114"/>
    </location>
</feature>
<feature type="unsure residue" description="L or I" evidence="3">
    <location>
        <position position="141"/>
    </location>
</feature>